<keyword id="KW-0687">Ribonucleoprotein</keyword>
<keyword id="KW-0689">Ribosomal protein</keyword>
<keyword id="KW-0694">RNA-binding</keyword>
<keyword id="KW-0699">rRNA-binding</keyword>
<comment type="function">
    <text evidence="1">One of the primary rRNA binding proteins. Required for association of the 30S and 50S subunits to form the 70S ribosome, for tRNA binding and peptide bond formation. It has been suggested to have peptidyltransferase activity; this is somewhat controversial. Makes several contacts with the 16S rRNA in the 70S ribosome.</text>
</comment>
<comment type="subunit">
    <text evidence="1">Part of the 50S ribosomal subunit. Forms a bridge to the 30S subunit in the 70S ribosome.</text>
</comment>
<comment type="similarity">
    <text evidence="1">Belongs to the universal ribosomal protein uL2 family.</text>
</comment>
<gene>
    <name evidence="1" type="primary">rplB</name>
    <name type="ordered locus">BH10480</name>
</gene>
<organism>
    <name type="scientific">Bartonella henselae (strain ATCC 49882 / DSM 28221 / CCUG 30454 / Houston 1)</name>
    <name type="common">Rochalimaea henselae</name>
    <dbReference type="NCBI Taxonomy" id="283166"/>
    <lineage>
        <taxon>Bacteria</taxon>
        <taxon>Pseudomonadati</taxon>
        <taxon>Pseudomonadota</taxon>
        <taxon>Alphaproteobacteria</taxon>
        <taxon>Hyphomicrobiales</taxon>
        <taxon>Bartonellaceae</taxon>
        <taxon>Bartonella</taxon>
    </lineage>
</organism>
<dbReference type="EMBL" id="BX897699">
    <property type="protein sequence ID" value="CAF27839.1"/>
    <property type="molecule type" value="Genomic_DNA"/>
</dbReference>
<dbReference type="RefSeq" id="WP_011180911.1">
    <property type="nucleotide sequence ID" value="NZ_LRIJ02000001.1"/>
</dbReference>
<dbReference type="SMR" id="Q6G2W8"/>
<dbReference type="PaxDb" id="283166-BH10480"/>
<dbReference type="EnsemblBacteria" id="CAF27839">
    <property type="protein sequence ID" value="CAF27839"/>
    <property type="gene ID" value="BH10480"/>
</dbReference>
<dbReference type="GeneID" id="92985266"/>
<dbReference type="KEGG" id="bhe:BH10480"/>
<dbReference type="eggNOG" id="COG0090">
    <property type="taxonomic scope" value="Bacteria"/>
</dbReference>
<dbReference type="OrthoDB" id="9778722at2"/>
<dbReference type="Proteomes" id="UP000000421">
    <property type="component" value="Chromosome"/>
</dbReference>
<dbReference type="GO" id="GO:0015934">
    <property type="term" value="C:large ribosomal subunit"/>
    <property type="evidence" value="ECO:0007669"/>
    <property type="project" value="InterPro"/>
</dbReference>
<dbReference type="GO" id="GO:0019843">
    <property type="term" value="F:rRNA binding"/>
    <property type="evidence" value="ECO:0007669"/>
    <property type="project" value="UniProtKB-UniRule"/>
</dbReference>
<dbReference type="GO" id="GO:0003735">
    <property type="term" value="F:structural constituent of ribosome"/>
    <property type="evidence" value="ECO:0007669"/>
    <property type="project" value="InterPro"/>
</dbReference>
<dbReference type="GO" id="GO:0016740">
    <property type="term" value="F:transferase activity"/>
    <property type="evidence" value="ECO:0007669"/>
    <property type="project" value="InterPro"/>
</dbReference>
<dbReference type="GO" id="GO:0002181">
    <property type="term" value="P:cytoplasmic translation"/>
    <property type="evidence" value="ECO:0007669"/>
    <property type="project" value="TreeGrafter"/>
</dbReference>
<dbReference type="FunFam" id="2.30.30.30:FF:000001">
    <property type="entry name" value="50S ribosomal protein L2"/>
    <property type="match status" value="1"/>
</dbReference>
<dbReference type="FunFam" id="2.40.50.140:FF:000003">
    <property type="entry name" value="50S ribosomal protein L2"/>
    <property type="match status" value="1"/>
</dbReference>
<dbReference type="FunFam" id="4.10.950.10:FF:000001">
    <property type="entry name" value="50S ribosomal protein L2"/>
    <property type="match status" value="1"/>
</dbReference>
<dbReference type="Gene3D" id="2.30.30.30">
    <property type="match status" value="1"/>
</dbReference>
<dbReference type="Gene3D" id="2.40.50.140">
    <property type="entry name" value="Nucleic acid-binding proteins"/>
    <property type="match status" value="1"/>
</dbReference>
<dbReference type="Gene3D" id="4.10.950.10">
    <property type="entry name" value="Ribosomal protein L2, domain 3"/>
    <property type="match status" value="1"/>
</dbReference>
<dbReference type="HAMAP" id="MF_01320_B">
    <property type="entry name" value="Ribosomal_uL2_B"/>
    <property type="match status" value="1"/>
</dbReference>
<dbReference type="InterPro" id="IPR012340">
    <property type="entry name" value="NA-bd_OB-fold"/>
</dbReference>
<dbReference type="InterPro" id="IPR014722">
    <property type="entry name" value="Rib_uL2_dom2"/>
</dbReference>
<dbReference type="InterPro" id="IPR002171">
    <property type="entry name" value="Ribosomal_uL2"/>
</dbReference>
<dbReference type="InterPro" id="IPR005880">
    <property type="entry name" value="Ribosomal_uL2_bac/org-type"/>
</dbReference>
<dbReference type="InterPro" id="IPR022669">
    <property type="entry name" value="Ribosomal_uL2_C"/>
</dbReference>
<dbReference type="InterPro" id="IPR022671">
    <property type="entry name" value="Ribosomal_uL2_CS"/>
</dbReference>
<dbReference type="InterPro" id="IPR014726">
    <property type="entry name" value="Ribosomal_uL2_dom3"/>
</dbReference>
<dbReference type="InterPro" id="IPR022666">
    <property type="entry name" value="Ribosomal_uL2_RNA-bd_dom"/>
</dbReference>
<dbReference type="InterPro" id="IPR008991">
    <property type="entry name" value="Translation_prot_SH3-like_sf"/>
</dbReference>
<dbReference type="NCBIfam" id="TIGR01171">
    <property type="entry name" value="rplB_bact"/>
    <property type="match status" value="1"/>
</dbReference>
<dbReference type="PANTHER" id="PTHR13691:SF5">
    <property type="entry name" value="LARGE RIBOSOMAL SUBUNIT PROTEIN UL2M"/>
    <property type="match status" value="1"/>
</dbReference>
<dbReference type="PANTHER" id="PTHR13691">
    <property type="entry name" value="RIBOSOMAL PROTEIN L2"/>
    <property type="match status" value="1"/>
</dbReference>
<dbReference type="Pfam" id="PF00181">
    <property type="entry name" value="Ribosomal_L2"/>
    <property type="match status" value="1"/>
</dbReference>
<dbReference type="Pfam" id="PF03947">
    <property type="entry name" value="Ribosomal_L2_C"/>
    <property type="match status" value="1"/>
</dbReference>
<dbReference type="PIRSF" id="PIRSF002158">
    <property type="entry name" value="Ribosomal_L2"/>
    <property type="match status" value="1"/>
</dbReference>
<dbReference type="SMART" id="SM01383">
    <property type="entry name" value="Ribosomal_L2"/>
    <property type="match status" value="1"/>
</dbReference>
<dbReference type="SMART" id="SM01382">
    <property type="entry name" value="Ribosomal_L2_C"/>
    <property type="match status" value="1"/>
</dbReference>
<dbReference type="SUPFAM" id="SSF50249">
    <property type="entry name" value="Nucleic acid-binding proteins"/>
    <property type="match status" value="1"/>
</dbReference>
<dbReference type="SUPFAM" id="SSF50104">
    <property type="entry name" value="Translation proteins SH3-like domain"/>
    <property type="match status" value="1"/>
</dbReference>
<dbReference type="PROSITE" id="PS00467">
    <property type="entry name" value="RIBOSOMAL_L2"/>
    <property type="match status" value="1"/>
</dbReference>
<evidence type="ECO:0000255" key="1">
    <source>
        <dbReference type="HAMAP-Rule" id="MF_01320"/>
    </source>
</evidence>
<evidence type="ECO:0000256" key="2">
    <source>
        <dbReference type="SAM" id="MobiDB-lite"/>
    </source>
</evidence>
<evidence type="ECO:0000305" key="3"/>
<feature type="chain" id="PRO_0000237156" description="Large ribosomal subunit protein uL2">
    <location>
        <begin position="1"/>
        <end position="277"/>
    </location>
</feature>
<feature type="region of interest" description="Disordered" evidence="2">
    <location>
        <begin position="222"/>
        <end position="277"/>
    </location>
</feature>
<reference key="1">
    <citation type="journal article" date="2004" name="Proc. Natl. Acad. Sci. U.S.A.">
        <title>The louse-borne human pathogen Bartonella quintana is a genomic derivative of the zoonotic agent Bartonella henselae.</title>
        <authorList>
            <person name="Alsmark U.C.M."/>
            <person name="Frank A.C."/>
            <person name="Karlberg E.O."/>
            <person name="Legault B.-A."/>
            <person name="Ardell D.H."/>
            <person name="Canbaeck B."/>
            <person name="Eriksson A.-S."/>
            <person name="Naeslund A.K."/>
            <person name="Handley S.A."/>
            <person name="Huvet M."/>
            <person name="La Scola B."/>
            <person name="Holmberg M."/>
            <person name="Andersson S.G.E."/>
        </authorList>
    </citation>
    <scope>NUCLEOTIDE SEQUENCE [LARGE SCALE GENOMIC DNA]</scope>
    <source>
        <strain>ATCC 49882 / DSM 28221 / CCUG 30454 / Houston 1</strain>
    </source>
</reference>
<proteinExistence type="inferred from homology"/>
<name>RL2_BARHE</name>
<protein>
    <recommendedName>
        <fullName evidence="1">Large ribosomal subunit protein uL2</fullName>
    </recommendedName>
    <alternativeName>
        <fullName evidence="3">50S ribosomal protein L2</fullName>
    </alternativeName>
</protein>
<sequence length="277" mass="30372">MALKQFNPTTPGQRQLVIVDRSCLYKGKSVKTLTEGLSSKGGRNNRGRVTARFQGGGHKRSYRFVDFKRFKRDVPAKVERLEYDPNRTAFIALIRYEDGQLSYILAPQRLDVGDSVIAGSNVDIKPGNAMPLGNMPVGTIIHNVEMKPGKGGQIARSAGAYAQLVGRDQGMAILRLNSGEQRLVSSGCFATVGAVSNPDHANINDGKAGRSRWRGRRPHVRGVAMNPVDHPHGGGEGRTSGGRHPVSPWGKPTKGKRTRSNKATDKFIMRTRHQRKK</sequence>
<accession>Q6G2W8</accession>